<reference key="1">
    <citation type="journal article" date="2003" name="Proc. Natl. Acad. Sci. U.S.A.">
        <title>Complete genome sequence of the Q-fever pathogen, Coxiella burnetii.</title>
        <authorList>
            <person name="Seshadri R."/>
            <person name="Paulsen I.T."/>
            <person name="Eisen J.A."/>
            <person name="Read T.D."/>
            <person name="Nelson K.E."/>
            <person name="Nelson W.C."/>
            <person name="Ward N.L."/>
            <person name="Tettelin H."/>
            <person name="Davidsen T.M."/>
            <person name="Beanan M.J."/>
            <person name="DeBoy R.T."/>
            <person name="Daugherty S.C."/>
            <person name="Brinkac L.M."/>
            <person name="Madupu R."/>
            <person name="Dodson R.J."/>
            <person name="Khouri H.M."/>
            <person name="Lee K.H."/>
            <person name="Carty H.A."/>
            <person name="Scanlan D."/>
            <person name="Heinzen R.A."/>
            <person name="Thompson H.A."/>
            <person name="Samuel J.E."/>
            <person name="Fraser C.M."/>
            <person name="Heidelberg J.F."/>
        </authorList>
    </citation>
    <scope>NUCLEOTIDE SEQUENCE [LARGE SCALE GENOMIC DNA]</scope>
    <source>
        <strain>RSA 493 / Nine Mile phase I</strain>
    </source>
</reference>
<feature type="chain" id="PRO_0000123607" description="Ditrans,polycis-undecaprenyl-diphosphate synthase ((2E,6E)-farnesyl-diphosphate specific)">
    <location>
        <begin position="1"/>
        <end position="237"/>
    </location>
</feature>
<feature type="active site" evidence="1">
    <location>
        <position position="11"/>
    </location>
</feature>
<feature type="active site" description="Proton acceptor" evidence="1">
    <location>
        <position position="59"/>
    </location>
</feature>
<feature type="binding site" evidence="1">
    <location>
        <position position="11"/>
    </location>
    <ligand>
        <name>Mg(2+)</name>
        <dbReference type="ChEBI" id="CHEBI:18420"/>
    </ligand>
</feature>
<feature type="binding site" evidence="1">
    <location>
        <begin position="12"/>
        <end position="15"/>
    </location>
    <ligand>
        <name>substrate</name>
    </ligand>
</feature>
<feature type="binding site" evidence="1">
    <location>
        <position position="16"/>
    </location>
    <ligand>
        <name>substrate</name>
    </ligand>
</feature>
<feature type="binding site" evidence="1">
    <location>
        <position position="24"/>
    </location>
    <ligand>
        <name>substrate</name>
    </ligand>
</feature>
<feature type="binding site" evidence="1">
    <location>
        <position position="28"/>
    </location>
    <ligand>
        <name>substrate</name>
    </ligand>
</feature>
<feature type="binding site" evidence="1">
    <location>
        <begin position="56"/>
        <end position="58"/>
    </location>
    <ligand>
        <name>substrate</name>
    </ligand>
</feature>
<feature type="binding site" evidence="1">
    <location>
        <position position="62"/>
    </location>
    <ligand>
        <name>substrate</name>
    </ligand>
</feature>
<feature type="binding site" evidence="1">
    <location>
        <position position="179"/>
    </location>
    <ligand>
        <name>substrate</name>
    </ligand>
</feature>
<feature type="binding site" evidence="1">
    <location>
        <begin position="185"/>
        <end position="187"/>
    </location>
    <ligand>
        <name>substrate</name>
    </ligand>
</feature>
<feature type="binding site" evidence="1">
    <location>
        <position position="198"/>
    </location>
    <ligand>
        <name>Mg(2+)</name>
        <dbReference type="ChEBI" id="CHEBI:18420"/>
    </ligand>
</feature>
<gene>
    <name evidence="1" type="primary">uppS</name>
    <name type="ordered locus">CBU_1382</name>
</gene>
<accession>Q83BV5</accession>
<sequence>MIPRHVAIVMDGNGRWANRRGLPRVAGHRAGAKVVRRIVEYAAEKPLEVLTLFAFSIENRARPQSEVNFLMSLFLDSLKKNTEELHKNNVQLRVIGDHREFDKKMLAQIQTSQDLTKHNTGLKLIIALNYSGRWDILQAVQRMAEKIKNQELTSELMSAELFQNYLCLSDLPEPDLLIRTSGEQRLSNFMLWQFAYTEIYFTPALWPDFNEETFDQALAFYRTRQRRFGLTPEQVEK</sequence>
<keyword id="KW-0133">Cell shape</keyword>
<keyword id="KW-0961">Cell wall biogenesis/degradation</keyword>
<keyword id="KW-0460">Magnesium</keyword>
<keyword id="KW-0479">Metal-binding</keyword>
<keyword id="KW-0573">Peptidoglycan synthesis</keyword>
<keyword id="KW-1185">Reference proteome</keyword>
<keyword id="KW-0808">Transferase</keyword>
<protein>
    <recommendedName>
        <fullName evidence="1">Ditrans,polycis-undecaprenyl-diphosphate synthase ((2E,6E)-farnesyl-diphosphate specific)</fullName>
        <ecNumber evidence="1">2.5.1.31</ecNumber>
    </recommendedName>
    <alternativeName>
        <fullName evidence="1">Ditrans,polycis-undecaprenylcistransferase</fullName>
    </alternativeName>
    <alternativeName>
        <fullName evidence="1">Undecaprenyl diphosphate synthase</fullName>
        <shortName evidence="1">UDS</shortName>
    </alternativeName>
    <alternativeName>
        <fullName evidence="1">Undecaprenyl pyrophosphate synthase</fullName>
        <shortName evidence="1">UPP synthase</shortName>
    </alternativeName>
</protein>
<comment type="function">
    <text evidence="1">Catalyzes the sequential condensation of isopentenyl diphosphate (IPP) with (2E,6E)-farnesyl diphosphate (E,E-FPP) to yield (2Z,6Z,10Z,14Z,18Z,22Z,26Z,30Z,34E,38E)-undecaprenyl diphosphate (di-trans,octa-cis-UPP). UPP is the precursor of glycosyl carrier lipid in the biosynthesis of bacterial cell wall polysaccharide components such as peptidoglycan and lipopolysaccharide.</text>
</comment>
<comment type="catalytic activity">
    <reaction evidence="1">
        <text>8 isopentenyl diphosphate + (2E,6E)-farnesyl diphosphate = di-trans,octa-cis-undecaprenyl diphosphate + 8 diphosphate</text>
        <dbReference type="Rhea" id="RHEA:27551"/>
        <dbReference type="ChEBI" id="CHEBI:33019"/>
        <dbReference type="ChEBI" id="CHEBI:58405"/>
        <dbReference type="ChEBI" id="CHEBI:128769"/>
        <dbReference type="ChEBI" id="CHEBI:175763"/>
        <dbReference type="EC" id="2.5.1.31"/>
    </reaction>
</comment>
<comment type="cofactor">
    <cofactor evidence="1">
        <name>Mg(2+)</name>
        <dbReference type="ChEBI" id="CHEBI:18420"/>
    </cofactor>
    <text evidence="1">Binds 2 magnesium ions per subunit.</text>
</comment>
<comment type="subunit">
    <text evidence="1">Homodimer.</text>
</comment>
<comment type="similarity">
    <text evidence="1">Belongs to the UPP synthase family.</text>
</comment>
<evidence type="ECO:0000255" key="1">
    <source>
        <dbReference type="HAMAP-Rule" id="MF_01139"/>
    </source>
</evidence>
<proteinExistence type="inferred from homology"/>
<name>UPPS_COXBU</name>
<dbReference type="EC" id="2.5.1.31" evidence="1"/>
<dbReference type="EMBL" id="AE016828">
    <property type="protein sequence ID" value="AAO90885.1"/>
    <property type="molecule type" value="Genomic_DNA"/>
</dbReference>
<dbReference type="RefSeq" id="NP_820371.1">
    <property type="nucleotide sequence ID" value="NC_002971.4"/>
</dbReference>
<dbReference type="RefSeq" id="WP_005771680.1">
    <property type="nucleotide sequence ID" value="NZ_CDBG01000001.1"/>
</dbReference>
<dbReference type="SMR" id="Q83BV5"/>
<dbReference type="STRING" id="227377.CBU_1382"/>
<dbReference type="EnsemblBacteria" id="AAO90885">
    <property type="protein sequence ID" value="AAO90885"/>
    <property type="gene ID" value="CBU_1382"/>
</dbReference>
<dbReference type="GeneID" id="1209288"/>
<dbReference type="KEGG" id="cbu:CBU_1382"/>
<dbReference type="PATRIC" id="fig|227377.7.peg.1378"/>
<dbReference type="eggNOG" id="COG0020">
    <property type="taxonomic scope" value="Bacteria"/>
</dbReference>
<dbReference type="HOGENOM" id="CLU_038505_1_1_6"/>
<dbReference type="OrthoDB" id="4191603at2"/>
<dbReference type="Proteomes" id="UP000002671">
    <property type="component" value="Chromosome"/>
</dbReference>
<dbReference type="GO" id="GO:0005829">
    <property type="term" value="C:cytosol"/>
    <property type="evidence" value="ECO:0000318"/>
    <property type="project" value="GO_Central"/>
</dbReference>
<dbReference type="GO" id="GO:0008834">
    <property type="term" value="F:ditrans,polycis-undecaprenyl-diphosphate synthase [(2E,6E)-farnesyl-diphosphate specific] activity"/>
    <property type="evidence" value="ECO:0000318"/>
    <property type="project" value="GO_Central"/>
</dbReference>
<dbReference type="GO" id="GO:0000287">
    <property type="term" value="F:magnesium ion binding"/>
    <property type="evidence" value="ECO:0000318"/>
    <property type="project" value="GO_Central"/>
</dbReference>
<dbReference type="GO" id="GO:0071555">
    <property type="term" value="P:cell wall organization"/>
    <property type="evidence" value="ECO:0007669"/>
    <property type="project" value="UniProtKB-KW"/>
</dbReference>
<dbReference type="GO" id="GO:0009252">
    <property type="term" value="P:peptidoglycan biosynthetic process"/>
    <property type="evidence" value="ECO:0007669"/>
    <property type="project" value="UniProtKB-UniRule"/>
</dbReference>
<dbReference type="GO" id="GO:0016094">
    <property type="term" value="P:polyprenol biosynthetic process"/>
    <property type="evidence" value="ECO:0000318"/>
    <property type="project" value="GO_Central"/>
</dbReference>
<dbReference type="GO" id="GO:0008360">
    <property type="term" value="P:regulation of cell shape"/>
    <property type="evidence" value="ECO:0007669"/>
    <property type="project" value="UniProtKB-KW"/>
</dbReference>
<dbReference type="CDD" id="cd00475">
    <property type="entry name" value="Cis_IPPS"/>
    <property type="match status" value="1"/>
</dbReference>
<dbReference type="FunFam" id="3.40.1180.10:FF:000001">
    <property type="entry name" value="(2E,6E)-farnesyl-diphosphate-specific ditrans,polycis-undecaprenyl-diphosphate synthase"/>
    <property type="match status" value="1"/>
</dbReference>
<dbReference type="Gene3D" id="3.40.1180.10">
    <property type="entry name" value="Decaprenyl diphosphate synthase-like"/>
    <property type="match status" value="1"/>
</dbReference>
<dbReference type="HAMAP" id="MF_01139">
    <property type="entry name" value="ISPT"/>
    <property type="match status" value="1"/>
</dbReference>
<dbReference type="InterPro" id="IPR001441">
    <property type="entry name" value="UPP_synth-like"/>
</dbReference>
<dbReference type="InterPro" id="IPR018520">
    <property type="entry name" value="UPP_synth-like_CS"/>
</dbReference>
<dbReference type="InterPro" id="IPR036424">
    <property type="entry name" value="UPP_synth-like_sf"/>
</dbReference>
<dbReference type="NCBIfam" id="NF011405">
    <property type="entry name" value="PRK14830.1"/>
    <property type="match status" value="1"/>
</dbReference>
<dbReference type="NCBIfam" id="TIGR00055">
    <property type="entry name" value="uppS"/>
    <property type="match status" value="1"/>
</dbReference>
<dbReference type="PANTHER" id="PTHR10291:SF0">
    <property type="entry name" value="DEHYDRODOLICHYL DIPHOSPHATE SYNTHASE 2"/>
    <property type="match status" value="1"/>
</dbReference>
<dbReference type="PANTHER" id="PTHR10291">
    <property type="entry name" value="DEHYDRODOLICHYL DIPHOSPHATE SYNTHASE FAMILY MEMBER"/>
    <property type="match status" value="1"/>
</dbReference>
<dbReference type="Pfam" id="PF01255">
    <property type="entry name" value="Prenyltransf"/>
    <property type="match status" value="1"/>
</dbReference>
<dbReference type="SUPFAM" id="SSF64005">
    <property type="entry name" value="Undecaprenyl diphosphate synthase"/>
    <property type="match status" value="1"/>
</dbReference>
<dbReference type="PROSITE" id="PS01066">
    <property type="entry name" value="UPP_SYNTHASE"/>
    <property type="match status" value="1"/>
</dbReference>
<organism>
    <name type="scientific">Coxiella burnetii (strain RSA 493 / Nine Mile phase I)</name>
    <dbReference type="NCBI Taxonomy" id="227377"/>
    <lineage>
        <taxon>Bacteria</taxon>
        <taxon>Pseudomonadati</taxon>
        <taxon>Pseudomonadota</taxon>
        <taxon>Gammaproteobacteria</taxon>
        <taxon>Legionellales</taxon>
        <taxon>Coxiellaceae</taxon>
        <taxon>Coxiella</taxon>
    </lineage>
</organism>